<name>RS7_ORITB</name>
<feature type="chain" id="PRO_0000344299" description="Small ribosomal subunit protein uS7">
    <location>
        <begin position="1"/>
        <end position="173"/>
    </location>
</feature>
<evidence type="ECO:0000255" key="1">
    <source>
        <dbReference type="HAMAP-Rule" id="MF_00480"/>
    </source>
</evidence>
<evidence type="ECO:0000305" key="2"/>
<sequence length="173" mass="19580">MSRRCTEVKRKSLPSNKYQSISAATPNQIMLASKLINKLTHHGNKELVEKMLDKIIQHIKHKYKADGFEVLESACNNVKPSLQVESLRIGGATYQVPSPVNELRSYTLAIKWIINSAANRTFEKSMWQKIAEELYEASNGRGGAVKKKDDNHKMAEANQAFSHLITKRRSRGN</sequence>
<dbReference type="EMBL" id="AM494475">
    <property type="protein sequence ID" value="CAM80878.1"/>
    <property type="molecule type" value="Genomic_DNA"/>
</dbReference>
<dbReference type="RefSeq" id="WP_011945044.1">
    <property type="nucleotide sequence ID" value="NC_009488.1"/>
</dbReference>
<dbReference type="SMR" id="A5CF22"/>
<dbReference type="GeneID" id="89458847"/>
<dbReference type="KEGG" id="ots:OTBS_1783"/>
<dbReference type="eggNOG" id="COG0049">
    <property type="taxonomic scope" value="Bacteria"/>
</dbReference>
<dbReference type="HOGENOM" id="CLU_072226_1_1_5"/>
<dbReference type="Proteomes" id="UP000001565">
    <property type="component" value="Chromosome"/>
</dbReference>
<dbReference type="GO" id="GO:0015935">
    <property type="term" value="C:small ribosomal subunit"/>
    <property type="evidence" value="ECO:0007669"/>
    <property type="project" value="InterPro"/>
</dbReference>
<dbReference type="GO" id="GO:0019843">
    <property type="term" value="F:rRNA binding"/>
    <property type="evidence" value="ECO:0007669"/>
    <property type="project" value="UniProtKB-UniRule"/>
</dbReference>
<dbReference type="GO" id="GO:0003735">
    <property type="term" value="F:structural constituent of ribosome"/>
    <property type="evidence" value="ECO:0007669"/>
    <property type="project" value="InterPro"/>
</dbReference>
<dbReference type="GO" id="GO:0000049">
    <property type="term" value="F:tRNA binding"/>
    <property type="evidence" value="ECO:0007669"/>
    <property type="project" value="UniProtKB-UniRule"/>
</dbReference>
<dbReference type="GO" id="GO:0006412">
    <property type="term" value="P:translation"/>
    <property type="evidence" value="ECO:0007669"/>
    <property type="project" value="UniProtKB-UniRule"/>
</dbReference>
<dbReference type="CDD" id="cd14869">
    <property type="entry name" value="uS7_Bacteria"/>
    <property type="match status" value="1"/>
</dbReference>
<dbReference type="Gene3D" id="1.10.455.10">
    <property type="entry name" value="Ribosomal protein S7 domain"/>
    <property type="match status" value="1"/>
</dbReference>
<dbReference type="HAMAP" id="MF_00480_B">
    <property type="entry name" value="Ribosomal_uS7_B"/>
    <property type="match status" value="1"/>
</dbReference>
<dbReference type="InterPro" id="IPR000235">
    <property type="entry name" value="Ribosomal_uS7"/>
</dbReference>
<dbReference type="InterPro" id="IPR005717">
    <property type="entry name" value="Ribosomal_uS7_bac/org-type"/>
</dbReference>
<dbReference type="InterPro" id="IPR023798">
    <property type="entry name" value="Ribosomal_uS7_dom"/>
</dbReference>
<dbReference type="InterPro" id="IPR036823">
    <property type="entry name" value="Ribosomal_uS7_dom_sf"/>
</dbReference>
<dbReference type="NCBIfam" id="TIGR01029">
    <property type="entry name" value="rpsG_bact"/>
    <property type="match status" value="1"/>
</dbReference>
<dbReference type="PANTHER" id="PTHR11205">
    <property type="entry name" value="RIBOSOMAL PROTEIN S7"/>
    <property type="match status" value="1"/>
</dbReference>
<dbReference type="Pfam" id="PF00177">
    <property type="entry name" value="Ribosomal_S7"/>
    <property type="match status" value="1"/>
</dbReference>
<dbReference type="PIRSF" id="PIRSF002122">
    <property type="entry name" value="RPS7p_RPS7a_RPS5e_RPS7o"/>
    <property type="match status" value="1"/>
</dbReference>
<dbReference type="SUPFAM" id="SSF47973">
    <property type="entry name" value="Ribosomal protein S7"/>
    <property type="match status" value="1"/>
</dbReference>
<accession>A5CF22</accession>
<reference key="1">
    <citation type="journal article" date="2007" name="Proc. Natl. Acad. Sci. U.S.A.">
        <title>The Orientia tsutsugamushi genome reveals massive proliferation of conjugative type IV secretion system and host-cell interaction genes.</title>
        <authorList>
            <person name="Cho N.-H."/>
            <person name="Kim H.-R."/>
            <person name="Lee J.-H."/>
            <person name="Kim S.-Y."/>
            <person name="Kim J."/>
            <person name="Cha S."/>
            <person name="Kim S.-Y."/>
            <person name="Darby A.C."/>
            <person name="Fuxelius H.-H."/>
            <person name="Yin J."/>
            <person name="Kim J.H."/>
            <person name="Kim J."/>
            <person name="Lee S.J."/>
            <person name="Koh Y.-S."/>
            <person name="Jang W.-J."/>
            <person name="Park K.-H."/>
            <person name="Andersson S.G.E."/>
            <person name="Choi M.-S."/>
            <person name="Kim I.-S."/>
        </authorList>
    </citation>
    <scope>NUCLEOTIDE SEQUENCE [LARGE SCALE GENOMIC DNA]</scope>
    <source>
        <strain>Boryong</strain>
    </source>
</reference>
<comment type="function">
    <text evidence="1">One of the primary rRNA binding proteins, it binds directly to 16S rRNA where it nucleates assembly of the head domain of the 30S subunit. Is located at the subunit interface close to the decoding center, probably blocks exit of the E-site tRNA.</text>
</comment>
<comment type="subunit">
    <text evidence="1">Part of the 30S ribosomal subunit. Contacts proteins S9 and S11.</text>
</comment>
<comment type="similarity">
    <text evidence="1">Belongs to the universal ribosomal protein uS7 family.</text>
</comment>
<organism>
    <name type="scientific">Orientia tsutsugamushi (strain Boryong)</name>
    <name type="common">Rickettsia tsutsugamushi</name>
    <dbReference type="NCBI Taxonomy" id="357244"/>
    <lineage>
        <taxon>Bacteria</taxon>
        <taxon>Pseudomonadati</taxon>
        <taxon>Pseudomonadota</taxon>
        <taxon>Alphaproteobacteria</taxon>
        <taxon>Rickettsiales</taxon>
        <taxon>Rickettsiaceae</taxon>
        <taxon>Rickettsieae</taxon>
        <taxon>Orientia</taxon>
    </lineage>
</organism>
<protein>
    <recommendedName>
        <fullName evidence="1">Small ribosomal subunit protein uS7</fullName>
    </recommendedName>
    <alternativeName>
        <fullName evidence="2">30S ribosomal protein S7</fullName>
    </alternativeName>
</protein>
<gene>
    <name evidence="1" type="primary">rpsG</name>
    <name type="ordered locus">OTBS_1783</name>
</gene>
<keyword id="KW-1185">Reference proteome</keyword>
<keyword id="KW-0687">Ribonucleoprotein</keyword>
<keyword id="KW-0689">Ribosomal protein</keyword>
<keyword id="KW-0694">RNA-binding</keyword>
<keyword id="KW-0699">rRNA-binding</keyword>
<keyword id="KW-0820">tRNA-binding</keyword>
<proteinExistence type="inferred from homology"/>